<proteinExistence type="inferred from homology"/>
<gene>
    <name evidence="1" type="primary">rpmG</name>
    <name type="ordered locus">HPSH_06235</name>
</gene>
<comment type="similarity">
    <text evidence="1">Belongs to the bacterial ribosomal protein bL33 family.</text>
</comment>
<feature type="chain" id="PRO_0000356482" description="Large ribosomal subunit protein bL33">
    <location>
        <begin position="1"/>
        <end position="52"/>
    </location>
</feature>
<name>RL33_HELPS</name>
<dbReference type="EMBL" id="CP001072">
    <property type="protein sequence ID" value="ACD48649.1"/>
    <property type="molecule type" value="Genomic_DNA"/>
</dbReference>
<dbReference type="RefSeq" id="WP_000865159.1">
    <property type="nucleotide sequence ID" value="NC_010698.2"/>
</dbReference>
<dbReference type="SMR" id="B2UUW7"/>
<dbReference type="KEGG" id="hps:HPSH_06235"/>
<dbReference type="HOGENOM" id="CLU_190949_0_2_7"/>
<dbReference type="GO" id="GO:0005737">
    <property type="term" value="C:cytoplasm"/>
    <property type="evidence" value="ECO:0007669"/>
    <property type="project" value="UniProtKB-ARBA"/>
</dbReference>
<dbReference type="GO" id="GO:1990904">
    <property type="term" value="C:ribonucleoprotein complex"/>
    <property type="evidence" value="ECO:0007669"/>
    <property type="project" value="UniProtKB-KW"/>
</dbReference>
<dbReference type="GO" id="GO:0005840">
    <property type="term" value="C:ribosome"/>
    <property type="evidence" value="ECO:0007669"/>
    <property type="project" value="UniProtKB-KW"/>
</dbReference>
<dbReference type="GO" id="GO:0003735">
    <property type="term" value="F:structural constituent of ribosome"/>
    <property type="evidence" value="ECO:0007669"/>
    <property type="project" value="InterPro"/>
</dbReference>
<dbReference type="GO" id="GO:0006412">
    <property type="term" value="P:translation"/>
    <property type="evidence" value="ECO:0007669"/>
    <property type="project" value="UniProtKB-UniRule"/>
</dbReference>
<dbReference type="Gene3D" id="2.20.28.120">
    <property type="entry name" value="Ribosomal protein L33"/>
    <property type="match status" value="1"/>
</dbReference>
<dbReference type="HAMAP" id="MF_00294">
    <property type="entry name" value="Ribosomal_bL33"/>
    <property type="match status" value="1"/>
</dbReference>
<dbReference type="InterPro" id="IPR001705">
    <property type="entry name" value="Ribosomal_bL33"/>
</dbReference>
<dbReference type="InterPro" id="IPR018264">
    <property type="entry name" value="Ribosomal_bL33_CS"/>
</dbReference>
<dbReference type="InterPro" id="IPR038584">
    <property type="entry name" value="Ribosomal_bL33_sf"/>
</dbReference>
<dbReference type="InterPro" id="IPR011332">
    <property type="entry name" value="Ribosomal_zn-bd"/>
</dbReference>
<dbReference type="NCBIfam" id="NF001764">
    <property type="entry name" value="PRK00504.1"/>
    <property type="match status" value="1"/>
</dbReference>
<dbReference type="NCBIfam" id="NF001860">
    <property type="entry name" value="PRK00595.1"/>
    <property type="match status" value="1"/>
</dbReference>
<dbReference type="NCBIfam" id="TIGR01023">
    <property type="entry name" value="rpmG_bact"/>
    <property type="match status" value="1"/>
</dbReference>
<dbReference type="PANTHER" id="PTHR43168">
    <property type="entry name" value="50S RIBOSOMAL PROTEIN L33, CHLOROPLASTIC"/>
    <property type="match status" value="1"/>
</dbReference>
<dbReference type="PANTHER" id="PTHR43168:SF6">
    <property type="entry name" value="LARGE RIBOSOMAL SUBUNIT PROTEIN BL33A"/>
    <property type="match status" value="1"/>
</dbReference>
<dbReference type="Pfam" id="PF00471">
    <property type="entry name" value="Ribosomal_L33"/>
    <property type="match status" value="1"/>
</dbReference>
<dbReference type="SUPFAM" id="SSF57829">
    <property type="entry name" value="Zn-binding ribosomal proteins"/>
    <property type="match status" value="1"/>
</dbReference>
<dbReference type="PROSITE" id="PS00582">
    <property type="entry name" value="RIBOSOMAL_L33"/>
    <property type="match status" value="1"/>
</dbReference>
<keyword id="KW-0687">Ribonucleoprotein</keyword>
<keyword id="KW-0689">Ribosomal protein</keyword>
<reference key="1">
    <citation type="submission" date="2008-05" db="EMBL/GenBank/DDBJ databases">
        <title>Genome sequence of Helicobacter pylori from the remote Amazon: traces of Asian ancestry of the first Americans.</title>
        <authorList>
            <person name="Kersulyte D."/>
            <person name="Kalia A."/>
            <person name="Gilman R.H."/>
            <person name="Berg D.E."/>
        </authorList>
    </citation>
    <scope>NUCLEOTIDE SEQUENCE [LARGE SCALE GENOMIC DNA]</scope>
    <source>
        <strain>Shi470</strain>
    </source>
</reference>
<evidence type="ECO:0000255" key="1">
    <source>
        <dbReference type="HAMAP-Rule" id="MF_00294"/>
    </source>
</evidence>
<evidence type="ECO:0000305" key="2"/>
<organism>
    <name type="scientific">Helicobacter pylori (strain Shi470)</name>
    <dbReference type="NCBI Taxonomy" id="512562"/>
    <lineage>
        <taxon>Bacteria</taxon>
        <taxon>Pseudomonadati</taxon>
        <taxon>Campylobacterota</taxon>
        <taxon>Epsilonproteobacteria</taxon>
        <taxon>Campylobacterales</taxon>
        <taxon>Helicobacteraceae</taxon>
        <taxon>Helicobacter</taxon>
    </lineage>
</organism>
<protein>
    <recommendedName>
        <fullName evidence="1">Large ribosomal subunit protein bL33</fullName>
    </recommendedName>
    <alternativeName>
        <fullName evidence="2">50S ribosomal protein L33</fullName>
    </alternativeName>
</protein>
<sequence>MKVKIGLKCSDCEDINYSTTKNAKTNTEKLELKKFCPRENKHTLHKEIKLKS</sequence>
<accession>B2UUW7</accession>